<protein>
    <recommendedName>
        <fullName evidence="1">GMP synthase [glutamine-hydrolyzing]</fullName>
        <ecNumber evidence="1">6.3.5.2</ecNumber>
    </recommendedName>
    <alternativeName>
        <fullName evidence="1">GMP synthetase</fullName>
    </alternativeName>
    <alternativeName>
        <fullName evidence="1">Glutamine amidotransferase</fullName>
    </alternativeName>
</protein>
<feature type="chain" id="PRO_0000140165" description="GMP synthase [glutamine-hydrolyzing]">
    <location>
        <begin position="1"/>
        <end position="547"/>
    </location>
</feature>
<feature type="domain" description="Glutamine amidotransferase type-1" evidence="1">
    <location>
        <begin position="12"/>
        <end position="210"/>
    </location>
</feature>
<feature type="domain" description="GMPS ATP-PPase" evidence="1">
    <location>
        <begin position="211"/>
        <end position="403"/>
    </location>
</feature>
<feature type="active site" description="Nucleophile" evidence="1">
    <location>
        <position position="89"/>
    </location>
</feature>
<feature type="active site" evidence="1">
    <location>
        <position position="184"/>
    </location>
</feature>
<feature type="active site" evidence="1">
    <location>
        <position position="186"/>
    </location>
</feature>
<feature type="binding site" evidence="1">
    <location>
        <begin position="238"/>
        <end position="244"/>
    </location>
    <ligand>
        <name>ATP</name>
        <dbReference type="ChEBI" id="CHEBI:30616"/>
    </ligand>
</feature>
<reference key="1">
    <citation type="journal article" date="2002" name="Nature">
        <title>Genome sequence of the plant pathogen Ralstonia solanacearum.</title>
        <authorList>
            <person name="Salanoubat M."/>
            <person name="Genin S."/>
            <person name="Artiguenave F."/>
            <person name="Gouzy J."/>
            <person name="Mangenot S."/>
            <person name="Arlat M."/>
            <person name="Billault A."/>
            <person name="Brottier P."/>
            <person name="Camus J.-C."/>
            <person name="Cattolico L."/>
            <person name="Chandler M."/>
            <person name="Choisne N."/>
            <person name="Claudel-Renard C."/>
            <person name="Cunnac S."/>
            <person name="Demange N."/>
            <person name="Gaspin C."/>
            <person name="Lavie M."/>
            <person name="Moisan A."/>
            <person name="Robert C."/>
            <person name="Saurin W."/>
            <person name="Schiex T."/>
            <person name="Siguier P."/>
            <person name="Thebault P."/>
            <person name="Whalen M."/>
            <person name="Wincker P."/>
            <person name="Levy M."/>
            <person name="Weissenbach J."/>
            <person name="Boucher C.A."/>
        </authorList>
    </citation>
    <scope>NUCLEOTIDE SEQUENCE [LARGE SCALE GENOMIC DNA]</scope>
    <source>
        <strain>ATCC BAA-1114 / GMI1000</strain>
    </source>
</reference>
<keyword id="KW-0067">ATP-binding</keyword>
<keyword id="KW-0315">Glutamine amidotransferase</keyword>
<keyword id="KW-0332">GMP biosynthesis</keyword>
<keyword id="KW-0436">Ligase</keyword>
<keyword id="KW-0547">Nucleotide-binding</keyword>
<keyword id="KW-0658">Purine biosynthesis</keyword>
<keyword id="KW-1185">Reference proteome</keyword>
<organism>
    <name type="scientific">Ralstonia nicotianae (strain ATCC BAA-1114 / GMI1000)</name>
    <name type="common">Ralstonia solanacearum</name>
    <dbReference type="NCBI Taxonomy" id="267608"/>
    <lineage>
        <taxon>Bacteria</taxon>
        <taxon>Pseudomonadati</taxon>
        <taxon>Pseudomonadota</taxon>
        <taxon>Betaproteobacteria</taxon>
        <taxon>Burkholderiales</taxon>
        <taxon>Burkholderiaceae</taxon>
        <taxon>Ralstonia</taxon>
        <taxon>Ralstonia solanacearum species complex</taxon>
    </lineage>
</organism>
<proteinExistence type="inferred from homology"/>
<comment type="function">
    <text evidence="1">Catalyzes the synthesis of GMP from XMP.</text>
</comment>
<comment type="catalytic activity">
    <reaction evidence="1">
        <text>XMP + L-glutamine + ATP + H2O = GMP + L-glutamate + AMP + diphosphate + 2 H(+)</text>
        <dbReference type="Rhea" id="RHEA:11680"/>
        <dbReference type="ChEBI" id="CHEBI:15377"/>
        <dbReference type="ChEBI" id="CHEBI:15378"/>
        <dbReference type="ChEBI" id="CHEBI:29985"/>
        <dbReference type="ChEBI" id="CHEBI:30616"/>
        <dbReference type="ChEBI" id="CHEBI:33019"/>
        <dbReference type="ChEBI" id="CHEBI:57464"/>
        <dbReference type="ChEBI" id="CHEBI:58115"/>
        <dbReference type="ChEBI" id="CHEBI:58359"/>
        <dbReference type="ChEBI" id="CHEBI:456215"/>
        <dbReference type="EC" id="6.3.5.2"/>
    </reaction>
</comment>
<comment type="pathway">
    <text evidence="1">Purine metabolism; GMP biosynthesis; GMP from XMP (L-Gln route): step 1/1.</text>
</comment>
<comment type="subunit">
    <text evidence="1">Homodimer.</text>
</comment>
<sequence>MPILSLHNMHDKVLILDFGSQVTQLIARRVREAHVYCEIHPNDVSDAFVREFAPKAIILSGSHASTYEDQDLRAPQAVWDLGVPVLGICYGMFAMTVQQGGKVEASAHREFGYAEVRAHGHTRLLDSIEDFRTPEGHGMLKVWMSHGDKVTEMPPGFKLMASTPSCPIAGMADEARGYYAVQFHPEVTHTVQGRALLERFVLEIAGAKPDWIMRDHIEEAVKSIREQVGDEEVILGLSGGVDSSVAAALIHRAIGDQLTCVFVDHGLLRLNEGQMVLDMFEGRLHAKVVHVDASEQFLGHLTGVTDPEAKRKIIGREFVEVFQAEAKTLTNAKWLAQGTIYPDVIESGGAKTKKATTIKSHHNVGGLPETLGLKLLEPLRDLFKDEVRELGVALGLPPEMVYRHPFPGPGLGVRILGEVKREYADLLRRADAIFIEELRGTKATAQDAVAGLCTEDQVGKSWYDLTSQAFAVFLPVKSVGVMGDGRTYDYVVALRAVQTTDFMTAHWAHLPYALLGRVSNRIINEVRGINRVVYDVSGKPPATIEWE</sequence>
<dbReference type="EC" id="6.3.5.2" evidence="1"/>
<dbReference type="EMBL" id="AL646052">
    <property type="protein sequence ID" value="CAD15133.1"/>
    <property type="molecule type" value="Genomic_DNA"/>
</dbReference>
<dbReference type="SMR" id="Q8XZG4"/>
<dbReference type="STRING" id="267608.RSc1431"/>
<dbReference type="MEROPS" id="C26.957"/>
<dbReference type="EnsemblBacteria" id="CAD15133">
    <property type="protein sequence ID" value="CAD15133"/>
    <property type="gene ID" value="RSc1431"/>
</dbReference>
<dbReference type="KEGG" id="rso:RSc1431"/>
<dbReference type="eggNOG" id="COG0518">
    <property type="taxonomic scope" value="Bacteria"/>
</dbReference>
<dbReference type="eggNOG" id="COG0519">
    <property type="taxonomic scope" value="Bacteria"/>
</dbReference>
<dbReference type="HOGENOM" id="CLU_014340_0_5_4"/>
<dbReference type="UniPathway" id="UPA00189">
    <property type="reaction ID" value="UER00296"/>
</dbReference>
<dbReference type="Proteomes" id="UP000001436">
    <property type="component" value="Chromosome"/>
</dbReference>
<dbReference type="GO" id="GO:0005829">
    <property type="term" value="C:cytosol"/>
    <property type="evidence" value="ECO:0007669"/>
    <property type="project" value="TreeGrafter"/>
</dbReference>
<dbReference type="GO" id="GO:0005524">
    <property type="term" value="F:ATP binding"/>
    <property type="evidence" value="ECO:0007669"/>
    <property type="project" value="UniProtKB-UniRule"/>
</dbReference>
<dbReference type="GO" id="GO:0003921">
    <property type="term" value="F:GMP synthase activity"/>
    <property type="evidence" value="ECO:0007669"/>
    <property type="project" value="InterPro"/>
</dbReference>
<dbReference type="CDD" id="cd01742">
    <property type="entry name" value="GATase1_GMP_Synthase"/>
    <property type="match status" value="1"/>
</dbReference>
<dbReference type="CDD" id="cd01997">
    <property type="entry name" value="GMP_synthase_C"/>
    <property type="match status" value="1"/>
</dbReference>
<dbReference type="FunFam" id="3.30.300.10:FF:000002">
    <property type="entry name" value="GMP synthase [glutamine-hydrolyzing]"/>
    <property type="match status" value="1"/>
</dbReference>
<dbReference type="FunFam" id="3.40.50.620:FF:000001">
    <property type="entry name" value="GMP synthase [glutamine-hydrolyzing]"/>
    <property type="match status" value="1"/>
</dbReference>
<dbReference type="FunFam" id="3.40.50.880:FF:000001">
    <property type="entry name" value="GMP synthase [glutamine-hydrolyzing]"/>
    <property type="match status" value="1"/>
</dbReference>
<dbReference type="Gene3D" id="3.30.300.10">
    <property type="match status" value="1"/>
</dbReference>
<dbReference type="Gene3D" id="3.40.50.880">
    <property type="match status" value="1"/>
</dbReference>
<dbReference type="Gene3D" id="3.40.50.620">
    <property type="entry name" value="HUPs"/>
    <property type="match status" value="1"/>
</dbReference>
<dbReference type="HAMAP" id="MF_00344">
    <property type="entry name" value="GMP_synthase"/>
    <property type="match status" value="1"/>
</dbReference>
<dbReference type="InterPro" id="IPR029062">
    <property type="entry name" value="Class_I_gatase-like"/>
</dbReference>
<dbReference type="InterPro" id="IPR017926">
    <property type="entry name" value="GATASE"/>
</dbReference>
<dbReference type="InterPro" id="IPR001674">
    <property type="entry name" value="GMP_synth_C"/>
</dbReference>
<dbReference type="InterPro" id="IPR004739">
    <property type="entry name" value="GMP_synth_GATase"/>
</dbReference>
<dbReference type="InterPro" id="IPR022955">
    <property type="entry name" value="GMP_synthase"/>
</dbReference>
<dbReference type="InterPro" id="IPR025777">
    <property type="entry name" value="GMPS_ATP_PPase_dom"/>
</dbReference>
<dbReference type="InterPro" id="IPR022310">
    <property type="entry name" value="NAD/GMP_synthase"/>
</dbReference>
<dbReference type="InterPro" id="IPR014729">
    <property type="entry name" value="Rossmann-like_a/b/a_fold"/>
</dbReference>
<dbReference type="NCBIfam" id="TIGR00884">
    <property type="entry name" value="guaA_Cterm"/>
    <property type="match status" value="1"/>
</dbReference>
<dbReference type="NCBIfam" id="TIGR00888">
    <property type="entry name" value="guaA_Nterm"/>
    <property type="match status" value="1"/>
</dbReference>
<dbReference type="NCBIfam" id="NF000848">
    <property type="entry name" value="PRK00074.1"/>
    <property type="match status" value="1"/>
</dbReference>
<dbReference type="PANTHER" id="PTHR11922:SF2">
    <property type="entry name" value="GMP SYNTHASE [GLUTAMINE-HYDROLYZING]"/>
    <property type="match status" value="1"/>
</dbReference>
<dbReference type="PANTHER" id="PTHR11922">
    <property type="entry name" value="GMP SYNTHASE-RELATED"/>
    <property type="match status" value="1"/>
</dbReference>
<dbReference type="Pfam" id="PF00117">
    <property type="entry name" value="GATase"/>
    <property type="match status" value="1"/>
</dbReference>
<dbReference type="Pfam" id="PF00958">
    <property type="entry name" value="GMP_synt_C"/>
    <property type="match status" value="1"/>
</dbReference>
<dbReference type="Pfam" id="PF02540">
    <property type="entry name" value="NAD_synthase"/>
    <property type="match status" value="1"/>
</dbReference>
<dbReference type="SUPFAM" id="SSF52402">
    <property type="entry name" value="Adenine nucleotide alpha hydrolases-like"/>
    <property type="match status" value="1"/>
</dbReference>
<dbReference type="SUPFAM" id="SSF52317">
    <property type="entry name" value="Class I glutamine amidotransferase-like"/>
    <property type="match status" value="1"/>
</dbReference>
<dbReference type="SUPFAM" id="SSF54810">
    <property type="entry name" value="GMP synthetase C-terminal dimerisation domain"/>
    <property type="match status" value="1"/>
</dbReference>
<dbReference type="PROSITE" id="PS51273">
    <property type="entry name" value="GATASE_TYPE_1"/>
    <property type="match status" value="1"/>
</dbReference>
<dbReference type="PROSITE" id="PS51553">
    <property type="entry name" value="GMPS_ATP_PPASE"/>
    <property type="match status" value="1"/>
</dbReference>
<accession>Q8XZG4</accession>
<name>GUAA_RALN1</name>
<evidence type="ECO:0000255" key="1">
    <source>
        <dbReference type="HAMAP-Rule" id="MF_00344"/>
    </source>
</evidence>
<gene>
    <name evidence="1" type="primary">guaA</name>
    <name type="ordered locus">RSc1431</name>
    <name type="ORF">RS05262</name>
</gene>